<name>URE2_SYNSC</name>
<sequence>MAPLIPGELLTEPGELELNAGRPVTTLSVSNSGDRPVQVGSHFHFAEANAALQFDRAAARGQRLDIPAGTAIRFEPGDSRDVNLIPFAGARCVIGFNGQINGPLDA</sequence>
<dbReference type="EC" id="3.5.1.5" evidence="1"/>
<dbReference type="EMBL" id="CP000110">
    <property type="protein sequence ID" value="ABB36351.1"/>
    <property type="molecule type" value="Genomic_DNA"/>
</dbReference>
<dbReference type="RefSeq" id="WP_011365546.1">
    <property type="nucleotide sequence ID" value="NC_007516.1"/>
</dbReference>
<dbReference type="SMR" id="Q3AGD1"/>
<dbReference type="STRING" id="110662.Syncc9605_2626"/>
<dbReference type="KEGG" id="syd:Syncc9605_2626"/>
<dbReference type="eggNOG" id="COG0832">
    <property type="taxonomic scope" value="Bacteria"/>
</dbReference>
<dbReference type="HOGENOM" id="CLU_129707_1_1_3"/>
<dbReference type="OrthoDB" id="9797217at2"/>
<dbReference type="UniPathway" id="UPA00258">
    <property type="reaction ID" value="UER00370"/>
</dbReference>
<dbReference type="GO" id="GO:0035550">
    <property type="term" value="C:urease complex"/>
    <property type="evidence" value="ECO:0007669"/>
    <property type="project" value="InterPro"/>
</dbReference>
<dbReference type="GO" id="GO:0009039">
    <property type="term" value="F:urease activity"/>
    <property type="evidence" value="ECO:0007669"/>
    <property type="project" value="UniProtKB-UniRule"/>
</dbReference>
<dbReference type="GO" id="GO:0043419">
    <property type="term" value="P:urea catabolic process"/>
    <property type="evidence" value="ECO:0007669"/>
    <property type="project" value="UniProtKB-UniRule"/>
</dbReference>
<dbReference type="CDD" id="cd00407">
    <property type="entry name" value="Urease_beta"/>
    <property type="match status" value="1"/>
</dbReference>
<dbReference type="FunFam" id="2.10.150.10:FF:000001">
    <property type="entry name" value="Urease subunit beta"/>
    <property type="match status" value="1"/>
</dbReference>
<dbReference type="Gene3D" id="2.10.150.10">
    <property type="entry name" value="Urease, beta subunit"/>
    <property type="match status" value="1"/>
</dbReference>
<dbReference type="HAMAP" id="MF_01954">
    <property type="entry name" value="Urease_beta"/>
    <property type="match status" value="1"/>
</dbReference>
<dbReference type="InterPro" id="IPR002019">
    <property type="entry name" value="Urease_beta-like"/>
</dbReference>
<dbReference type="InterPro" id="IPR036461">
    <property type="entry name" value="Urease_betasu_sf"/>
</dbReference>
<dbReference type="InterPro" id="IPR050069">
    <property type="entry name" value="Urease_subunit"/>
</dbReference>
<dbReference type="NCBIfam" id="NF009682">
    <property type="entry name" value="PRK13203.1"/>
    <property type="match status" value="1"/>
</dbReference>
<dbReference type="NCBIfam" id="TIGR00192">
    <property type="entry name" value="urease_beta"/>
    <property type="match status" value="1"/>
</dbReference>
<dbReference type="PANTHER" id="PTHR33569">
    <property type="entry name" value="UREASE"/>
    <property type="match status" value="1"/>
</dbReference>
<dbReference type="PANTHER" id="PTHR33569:SF1">
    <property type="entry name" value="UREASE"/>
    <property type="match status" value="1"/>
</dbReference>
<dbReference type="Pfam" id="PF00699">
    <property type="entry name" value="Urease_beta"/>
    <property type="match status" value="1"/>
</dbReference>
<dbReference type="SUPFAM" id="SSF51278">
    <property type="entry name" value="Urease, beta-subunit"/>
    <property type="match status" value="1"/>
</dbReference>
<organism>
    <name type="scientific">Synechococcus sp. (strain CC9605)</name>
    <dbReference type="NCBI Taxonomy" id="110662"/>
    <lineage>
        <taxon>Bacteria</taxon>
        <taxon>Bacillati</taxon>
        <taxon>Cyanobacteriota</taxon>
        <taxon>Cyanophyceae</taxon>
        <taxon>Synechococcales</taxon>
        <taxon>Synechococcaceae</taxon>
        <taxon>Synechococcus</taxon>
    </lineage>
</organism>
<feature type="chain" id="PRO_0000239902" description="Urease subunit beta">
    <location>
        <begin position="1"/>
        <end position="106"/>
    </location>
</feature>
<protein>
    <recommendedName>
        <fullName evidence="1">Urease subunit beta</fullName>
        <ecNumber evidence="1">3.5.1.5</ecNumber>
    </recommendedName>
    <alternativeName>
        <fullName evidence="1">Urea amidohydrolase subunit beta</fullName>
    </alternativeName>
</protein>
<proteinExistence type="inferred from homology"/>
<reference key="1">
    <citation type="submission" date="2005-07" db="EMBL/GenBank/DDBJ databases">
        <title>Complete sequence of Synechococcus sp. CC9605.</title>
        <authorList>
            <consortium name="US DOE Joint Genome Institute"/>
            <person name="Copeland A."/>
            <person name="Lucas S."/>
            <person name="Lapidus A."/>
            <person name="Barry K."/>
            <person name="Detter J.C."/>
            <person name="Glavina T."/>
            <person name="Hammon N."/>
            <person name="Israni S."/>
            <person name="Pitluck S."/>
            <person name="Schmutz J."/>
            <person name="Martinez M."/>
            <person name="Larimer F."/>
            <person name="Land M."/>
            <person name="Kyrpides N."/>
            <person name="Ivanova N."/>
            <person name="Richardson P."/>
        </authorList>
    </citation>
    <scope>NUCLEOTIDE SEQUENCE [LARGE SCALE GENOMIC DNA]</scope>
    <source>
        <strain>CC9605</strain>
    </source>
</reference>
<keyword id="KW-0963">Cytoplasm</keyword>
<keyword id="KW-0378">Hydrolase</keyword>
<gene>
    <name evidence="1" type="primary">ureB</name>
    <name type="ordered locus">Syncc9605_2626</name>
</gene>
<evidence type="ECO:0000255" key="1">
    <source>
        <dbReference type="HAMAP-Rule" id="MF_01954"/>
    </source>
</evidence>
<accession>Q3AGD1</accession>
<comment type="catalytic activity">
    <reaction evidence="1">
        <text>urea + 2 H2O + H(+) = hydrogencarbonate + 2 NH4(+)</text>
        <dbReference type="Rhea" id="RHEA:20557"/>
        <dbReference type="ChEBI" id="CHEBI:15377"/>
        <dbReference type="ChEBI" id="CHEBI:15378"/>
        <dbReference type="ChEBI" id="CHEBI:16199"/>
        <dbReference type="ChEBI" id="CHEBI:17544"/>
        <dbReference type="ChEBI" id="CHEBI:28938"/>
        <dbReference type="EC" id="3.5.1.5"/>
    </reaction>
</comment>
<comment type="pathway">
    <text evidence="1">Nitrogen metabolism; urea degradation; CO(2) and NH(3) from urea (urease route): step 1/1.</text>
</comment>
<comment type="subunit">
    <text evidence="1">Heterotrimer of UreA (gamma), UreB (beta) and UreC (alpha) subunits. Three heterotrimers associate to form the active enzyme.</text>
</comment>
<comment type="subcellular location">
    <subcellularLocation>
        <location evidence="1">Cytoplasm</location>
    </subcellularLocation>
</comment>
<comment type="similarity">
    <text evidence="1">Belongs to the urease beta subunit family.</text>
</comment>